<name>EX7S_RICBR</name>
<feature type="chain" id="PRO_0000272641" description="Exodeoxyribonuclease 7 small subunit">
    <location>
        <begin position="1"/>
        <end position="80"/>
    </location>
</feature>
<gene>
    <name evidence="1" type="primary">xseB</name>
    <name type="ordered locus">RBE_0766</name>
</gene>
<comment type="function">
    <text evidence="1">Bidirectionally degrades single-stranded DNA into large acid-insoluble oligonucleotides, which are then degraded further into small acid-soluble oligonucleotides.</text>
</comment>
<comment type="catalytic activity">
    <reaction evidence="1">
        <text>Exonucleolytic cleavage in either 5'- to 3'- or 3'- to 5'-direction to yield nucleoside 5'-phosphates.</text>
        <dbReference type="EC" id="3.1.11.6"/>
    </reaction>
</comment>
<comment type="subunit">
    <text evidence="1">Heterooligomer composed of large and small subunits.</text>
</comment>
<comment type="subcellular location">
    <subcellularLocation>
        <location evidence="1">Cytoplasm</location>
    </subcellularLocation>
</comment>
<comment type="similarity">
    <text evidence="1">Belongs to the XseB family.</text>
</comment>
<protein>
    <recommendedName>
        <fullName evidence="1">Exodeoxyribonuclease 7 small subunit</fullName>
        <ecNumber evidence="1">3.1.11.6</ecNumber>
    </recommendedName>
    <alternativeName>
        <fullName evidence="1">Exodeoxyribonuclease VII small subunit</fullName>
        <shortName evidence="1">Exonuclease VII small subunit</shortName>
    </alternativeName>
</protein>
<keyword id="KW-0963">Cytoplasm</keyword>
<keyword id="KW-0269">Exonuclease</keyword>
<keyword id="KW-0378">Hydrolase</keyword>
<keyword id="KW-0540">Nuclease</keyword>
<dbReference type="EC" id="3.1.11.6" evidence="1"/>
<dbReference type="EMBL" id="CP000087">
    <property type="protein sequence ID" value="ABE04847.1"/>
    <property type="molecule type" value="Genomic_DNA"/>
</dbReference>
<dbReference type="RefSeq" id="WP_011477434.1">
    <property type="nucleotide sequence ID" value="NC_007940.1"/>
</dbReference>
<dbReference type="SMR" id="Q1RIG7"/>
<dbReference type="KEGG" id="rbe:RBE_0766"/>
<dbReference type="eggNOG" id="COG1722">
    <property type="taxonomic scope" value="Bacteria"/>
</dbReference>
<dbReference type="HOGENOM" id="CLU_145918_0_3_5"/>
<dbReference type="OrthoDB" id="9808145at2"/>
<dbReference type="Proteomes" id="UP000001951">
    <property type="component" value="Chromosome"/>
</dbReference>
<dbReference type="GO" id="GO:0005829">
    <property type="term" value="C:cytosol"/>
    <property type="evidence" value="ECO:0007669"/>
    <property type="project" value="TreeGrafter"/>
</dbReference>
<dbReference type="GO" id="GO:0009318">
    <property type="term" value="C:exodeoxyribonuclease VII complex"/>
    <property type="evidence" value="ECO:0007669"/>
    <property type="project" value="InterPro"/>
</dbReference>
<dbReference type="GO" id="GO:0008855">
    <property type="term" value="F:exodeoxyribonuclease VII activity"/>
    <property type="evidence" value="ECO:0007669"/>
    <property type="project" value="UniProtKB-UniRule"/>
</dbReference>
<dbReference type="GO" id="GO:0006308">
    <property type="term" value="P:DNA catabolic process"/>
    <property type="evidence" value="ECO:0007669"/>
    <property type="project" value="UniProtKB-UniRule"/>
</dbReference>
<dbReference type="Gene3D" id="1.10.287.1040">
    <property type="entry name" value="Exonuclease VII, small subunit"/>
    <property type="match status" value="1"/>
</dbReference>
<dbReference type="HAMAP" id="MF_00337">
    <property type="entry name" value="Exonuc_7_S"/>
    <property type="match status" value="1"/>
</dbReference>
<dbReference type="InterPro" id="IPR003761">
    <property type="entry name" value="Exonuc_VII_S"/>
</dbReference>
<dbReference type="InterPro" id="IPR037004">
    <property type="entry name" value="Exonuc_VII_ssu_sf"/>
</dbReference>
<dbReference type="NCBIfam" id="NF002140">
    <property type="entry name" value="PRK00977.1-4"/>
    <property type="match status" value="1"/>
</dbReference>
<dbReference type="NCBIfam" id="TIGR01280">
    <property type="entry name" value="xseB"/>
    <property type="match status" value="1"/>
</dbReference>
<dbReference type="PANTHER" id="PTHR34137">
    <property type="entry name" value="EXODEOXYRIBONUCLEASE 7 SMALL SUBUNIT"/>
    <property type="match status" value="1"/>
</dbReference>
<dbReference type="PANTHER" id="PTHR34137:SF1">
    <property type="entry name" value="EXODEOXYRIBONUCLEASE 7 SMALL SUBUNIT"/>
    <property type="match status" value="1"/>
</dbReference>
<dbReference type="Pfam" id="PF02609">
    <property type="entry name" value="Exonuc_VII_S"/>
    <property type="match status" value="1"/>
</dbReference>
<dbReference type="PIRSF" id="PIRSF006488">
    <property type="entry name" value="Exonuc_VII_S"/>
    <property type="match status" value="1"/>
</dbReference>
<dbReference type="SUPFAM" id="SSF116842">
    <property type="entry name" value="XseB-like"/>
    <property type="match status" value="1"/>
</dbReference>
<reference key="1">
    <citation type="journal article" date="2006" name="PLoS Genet.">
        <title>Genome sequence of Rickettsia bellii illuminates the role of amoebae in gene exchanges between intracellular pathogens.</title>
        <authorList>
            <person name="Ogata H."/>
            <person name="La Scola B."/>
            <person name="Audic S."/>
            <person name="Renesto P."/>
            <person name="Blanc G."/>
            <person name="Robert C."/>
            <person name="Fournier P.-E."/>
            <person name="Claverie J.-M."/>
            <person name="Raoult D."/>
        </authorList>
    </citation>
    <scope>NUCLEOTIDE SEQUENCE [LARGE SCALE GENOMIC DNA]</scope>
    <source>
        <strain>RML369-C</strain>
    </source>
</reference>
<proteinExistence type="inferred from homology"/>
<organism>
    <name type="scientific">Rickettsia bellii (strain RML369-C)</name>
    <dbReference type="NCBI Taxonomy" id="336407"/>
    <lineage>
        <taxon>Bacteria</taxon>
        <taxon>Pseudomonadati</taxon>
        <taxon>Pseudomonadota</taxon>
        <taxon>Alphaproteobacteria</taxon>
        <taxon>Rickettsiales</taxon>
        <taxon>Rickettsiaceae</taxon>
        <taxon>Rickettsieae</taxon>
        <taxon>Rickettsia</taxon>
        <taxon>belli group</taxon>
    </lineage>
</organism>
<sequence length="80" mass="9117">MTTNKNLDENISFEEALSELEEIVKKIDNGQETLEAAVNSFERGILLKNHCEKKLKEARLKIEKITKLADSTITLEEVEV</sequence>
<evidence type="ECO:0000255" key="1">
    <source>
        <dbReference type="HAMAP-Rule" id="MF_00337"/>
    </source>
</evidence>
<accession>Q1RIG7</accession>